<protein>
    <recommendedName>
        <fullName evidence="1">Nucleotide-binding protein YajQ</fullName>
    </recommendedName>
</protein>
<reference key="1">
    <citation type="journal article" date="2011" name="J. Bacteriol.">
        <title>Comparative genomics of 28 Salmonella enterica isolates: evidence for CRISPR-mediated adaptive sublineage evolution.</title>
        <authorList>
            <person name="Fricke W.F."/>
            <person name="Mammel M.K."/>
            <person name="McDermott P.F."/>
            <person name="Tartera C."/>
            <person name="White D.G."/>
            <person name="Leclerc J.E."/>
            <person name="Ravel J."/>
            <person name="Cebula T.A."/>
        </authorList>
    </citation>
    <scope>NUCLEOTIDE SEQUENCE [LARGE SCALE GENOMIC DNA]</scope>
    <source>
        <strain>SL483</strain>
    </source>
</reference>
<comment type="function">
    <text evidence="1">Nucleotide-binding protein.</text>
</comment>
<comment type="similarity">
    <text evidence="1">Belongs to the YajQ family.</text>
</comment>
<feature type="chain" id="PRO_1000130645" description="Nucleotide-binding protein YajQ">
    <location>
        <begin position="1"/>
        <end position="163"/>
    </location>
</feature>
<proteinExistence type="inferred from homology"/>
<name>YAJQ_SALA4</name>
<sequence length="163" mass="18319">MPSFDIVSEVDLQEARNGVDNAVREVESRFDFRGVEATIELNDANKTIKVLSESDFQVNQLLDILRAKLLKRGIEGASLDVPDEFVHSGKTWYVEAKLKQGIESAVQKKIVKLIKDSKLKVQAQIQGEEIRVTGKSRDDLQSVMALVRGGDLGQPFQFKNFRD</sequence>
<keyword id="KW-0547">Nucleotide-binding</keyword>
<evidence type="ECO:0000255" key="1">
    <source>
        <dbReference type="HAMAP-Rule" id="MF_00632"/>
    </source>
</evidence>
<accession>B5EXH5</accession>
<gene>
    <name evidence="1" type="primary">yajQ</name>
    <name type="ordered locus">SeAg_B0474</name>
</gene>
<organism>
    <name type="scientific">Salmonella agona (strain SL483)</name>
    <dbReference type="NCBI Taxonomy" id="454166"/>
    <lineage>
        <taxon>Bacteria</taxon>
        <taxon>Pseudomonadati</taxon>
        <taxon>Pseudomonadota</taxon>
        <taxon>Gammaproteobacteria</taxon>
        <taxon>Enterobacterales</taxon>
        <taxon>Enterobacteriaceae</taxon>
        <taxon>Salmonella</taxon>
    </lineage>
</organism>
<dbReference type="EMBL" id="CP001138">
    <property type="protein sequence ID" value="ACH50528.1"/>
    <property type="molecule type" value="Genomic_DNA"/>
</dbReference>
<dbReference type="RefSeq" id="WP_001138913.1">
    <property type="nucleotide sequence ID" value="NC_011149.1"/>
</dbReference>
<dbReference type="SMR" id="B5EXH5"/>
<dbReference type="KEGG" id="sea:SeAg_B0474"/>
<dbReference type="HOGENOM" id="CLU_099839_1_0_6"/>
<dbReference type="Proteomes" id="UP000008819">
    <property type="component" value="Chromosome"/>
</dbReference>
<dbReference type="GO" id="GO:0005829">
    <property type="term" value="C:cytosol"/>
    <property type="evidence" value="ECO:0007669"/>
    <property type="project" value="TreeGrafter"/>
</dbReference>
<dbReference type="GO" id="GO:0000166">
    <property type="term" value="F:nucleotide binding"/>
    <property type="evidence" value="ECO:0007669"/>
    <property type="project" value="TreeGrafter"/>
</dbReference>
<dbReference type="CDD" id="cd11740">
    <property type="entry name" value="YajQ_like"/>
    <property type="match status" value="1"/>
</dbReference>
<dbReference type="FunFam" id="3.30.70.860:FF:000001">
    <property type="entry name" value="UPF0234 protein YajQ"/>
    <property type="match status" value="1"/>
</dbReference>
<dbReference type="FunFam" id="3.30.70.990:FF:000001">
    <property type="entry name" value="UPF0234 protein YajQ"/>
    <property type="match status" value="1"/>
</dbReference>
<dbReference type="Gene3D" id="3.30.70.860">
    <property type="match status" value="1"/>
</dbReference>
<dbReference type="Gene3D" id="3.30.70.990">
    <property type="entry name" value="YajQ-like, domain 2"/>
    <property type="match status" value="1"/>
</dbReference>
<dbReference type="HAMAP" id="MF_00632">
    <property type="entry name" value="YajQ"/>
    <property type="match status" value="1"/>
</dbReference>
<dbReference type="InterPro" id="IPR007551">
    <property type="entry name" value="DUF520"/>
</dbReference>
<dbReference type="InterPro" id="IPR035571">
    <property type="entry name" value="UPF0234-like_C"/>
</dbReference>
<dbReference type="InterPro" id="IPR035570">
    <property type="entry name" value="UPF0234_N"/>
</dbReference>
<dbReference type="InterPro" id="IPR036183">
    <property type="entry name" value="YajQ-like_sf"/>
</dbReference>
<dbReference type="NCBIfam" id="NF003819">
    <property type="entry name" value="PRK05412.1"/>
    <property type="match status" value="1"/>
</dbReference>
<dbReference type="PANTHER" id="PTHR30476">
    <property type="entry name" value="UPF0234 PROTEIN YAJQ"/>
    <property type="match status" value="1"/>
</dbReference>
<dbReference type="PANTHER" id="PTHR30476:SF0">
    <property type="entry name" value="UPF0234 PROTEIN YAJQ"/>
    <property type="match status" value="1"/>
</dbReference>
<dbReference type="Pfam" id="PF04461">
    <property type="entry name" value="DUF520"/>
    <property type="match status" value="1"/>
</dbReference>
<dbReference type="SUPFAM" id="SSF89963">
    <property type="entry name" value="YajQ-like"/>
    <property type="match status" value="2"/>
</dbReference>